<name>CLPP_BACVZ</name>
<proteinExistence type="inferred from homology"/>
<dbReference type="EC" id="3.4.21.92" evidence="1"/>
<dbReference type="EMBL" id="CP000560">
    <property type="protein sequence ID" value="ABS75515.1"/>
    <property type="molecule type" value="Genomic_DNA"/>
</dbReference>
<dbReference type="RefSeq" id="WP_003151513.1">
    <property type="nucleotide sequence ID" value="NC_009725.2"/>
</dbReference>
<dbReference type="SMR" id="A7Z939"/>
<dbReference type="MEROPS" id="S14.001"/>
<dbReference type="GeneID" id="93082330"/>
<dbReference type="KEGG" id="bay:RBAM_031850"/>
<dbReference type="HOGENOM" id="CLU_058707_3_2_9"/>
<dbReference type="Proteomes" id="UP000001120">
    <property type="component" value="Chromosome"/>
</dbReference>
<dbReference type="GO" id="GO:0005737">
    <property type="term" value="C:cytoplasm"/>
    <property type="evidence" value="ECO:0007669"/>
    <property type="project" value="UniProtKB-SubCell"/>
</dbReference>
<dbReference type="GO" id="GO:0009368">
    <property type="term" value="C:endopeptidase Clp complex"/>
    <property type="evidence" value="ECO:0007669"/>
    <property type="project" value="TreeGrafter"/>
</dbReference>
<dbReference type="GO" id="GO:0004176">
    <property type="term" value="F:ATP-dependent peptidase activity"/>
    <property type="evidence" value="ECO:0007669"/>
    <property type="project" value="InterPro"/>
</dbReference>
<dbReference type="GO" id="GO:0051117">
    <property type="term" value="F:ATPase binding"/>
    <property type="evidence" value="ECO:0007669"/>
    <property type="project" value="TreeGrafter"/>
</dbReference>
<dbReference type="GO" id="GO:0004252">
    <property type="term" value="F:serine-type endopeptidase activity"/>
    <property type="evidence" value="ECO:0007669"/>
    <property type="project" value="UniProtKB-UniRule"/>
</dbReference>
<dbReference type="GO" id="GO:0006515">
    <property type="term" value="P:protein quality control for misfolded or incompletely synthesized proteins"/>
    <property type="evidence" value="ECO:0007669"/>
    <property type="project" value="TreeGrafter"/>
</dbReference>
<dbReference type="CDD" id="cd07017">
    <property type="entry name" value="S14_ClpP_2"/>
    <property type="match status" value="1"/>
</dbReference>
<dbReference type="FunFam" id="3.90.226.10:FF:000001">
    <property type="entry name" value="ATP-dependent Clp protease proteolytic subunit"/>
    <property type="match status" value="1"/>
</dbReference>
<dbReference type="Gene3D" id="3.90.226.10">
    <property type="entry name" value="2-enoyl-CoA Hydratase, Chain A, domain 1"/>
    <property type="match status" value="1"/>
</dbReference>
<dbReference type="HAMAP" id="MF_00444">
    <property type="entry name" value="ClpP"/>
    <property type="match status" value="1"/>
</dbReference>
<dbReference type="InterPro" id="IPR001907">
    <property type="entry name" value="ClpP"/>
</dbReference>
<dbReference type="InterPro" id="IPR029045">
    <property type="entry name" value="ClpP/crotonase-like_dom_sf"/>
</dbReference>
<dbReference type="InterPro" id="IPR023562">
    <property type="entry name" value="ClpP/TepA"/>
</dbReference>
<dbReference type="InterPro" id="IPR033135">
    <property type="entry name" value="ClpP_His_AS"/>
</dbReference>
<dbReference type="InterPro" id="IPR018215">
    <property type="entry name" value="ClpP_Ser_AS"/>
</dbReference>
<dbReference type="NCBIfam" id="TIGR00493">
    <property type="entry name" value="clpP"/>
    <property type="match status" value="1"/>
</dbReference>
<dbReference type="NCBIfam" id="NF001368">
    <property type="entry name" value="PRK00277.1"/>
    <property type="match status" value="1"/>
</dbReference>
<dbReference type="NCBIfam" id="NF009205">
    <property type="entry name" value="PRK12553.1"/>
    <property type="match status" value="1"/>
</dbReference>
<dbReference type="PANTHER" id="PTHR10381">
    <property type="entry name" value="ATP-DEPENDENT CLP PROTEASE PROTEOLYTIC SUBUNIT"/>
    <property type="match status" value="1"/>
</dbReference>
<dbReference type="PANTHER" id="PTHR10381:SF70">
    <property type="entry name" value="ATP-DEPENDENT CLP PROTEASE PROTEOLYTIC SUBUNIT"/>
    <property type="match status" value="1"/>
</dbReference>
<dbReference type="Pfam" id="PF00574">
    <property type="entry name" value="CLP_protease"/>
    <property type="match status" value="1"/>
</dbReference>
<dbReference type="PRINTS" id="PR00127">
    <property type="entry name" value="CLPPROTEASEP"/>
</dbReference>
<dbReference type="SUPFAM" id="SSF52096">
    <property type="entry name" value="ClpP/crotonase"/>
    <property type="match status" value="1"/>
</dbReference>
<dbReference type="PROSITE" id="PS00382">
    <property type="entry name" value="CLP_PROTEASE_HIS"/>
    <property type="match status" value="1"/>
</dbReference>
<dbReference type="PROSITE" id="PS00381">
    <property type="entry name" value="CLP_PROTEASE_SER"/>
    <property type="match status" value="1"/>
</dbReference>
<protein>
    <recommendedName>
        <fullName evidence="1">ATP-dependent Clp protease proteolytic subunit</fullName>
        <ecNumber evidence="1">3.4.21.92</ecNumber>
    </recommendedName>
    <alternativeName>
        <fullName evidence="1">Endopeptidase Clp</fullName>
    </alternativeName>
</protein>
<reference key="1">
    <citation type="journal article" date="2007" name="Nat. Biotechnol.">
        <title>Comparative analysis of the complete genome sequence of the plant growth-promoting bacterium Bacillus amyloliquefaciens FZB42.</title>
        <authorList>
            <person name="Chen X.H."/>
            <person name="Koumoutsi A."/>
            <person name="Scholz R."/>
            <person name="Eisenreich A."/>
            <person name="Schneider K."/>
            <person name="Heinemeyer I."/>
            <person name="Morgenstern B."/>
            <person name="Voss B."/>
            <person name="Hess W.R."/>
            <person name="Reva O."/>
            <person name="Junge H."/>
            <person name="Voigt B."/>
            <person name="Jungblut P.R."/>
            <person name="Vater J."/>
            <person name="Suessmuth R."/>
            <person name="Liesegang H."/>
            <person name="Strittmatter A."/>
            <person name="Gottschalk G."/>
            <person name="Borriss R."/>
        </authorList>
    </citation>
    <scope>NUCLEOTIDE SEQUENCE [LARGE SCALE GENOMIC DNA]</scope>
    <source>
        <strain>DSM 23117 / BGSC 10A6 / LMG 26770 / FZB42</strain>
    </source>
</reference>
<accession>A7Z939</accession>
<sequence>MNLIPTVIEQTNRGERAYDIYSRLLKDRIIMLGSAIDDNVANSIVSQLLFLEAEDPEKDISIYINSPGGSITAGMAIYDTMQFIKPKVSTICIGMAASMGAFLLAAGEKGKRYALPNSEVMIHQPLGGAQGQATEIEIAAKRILLLRDKLNKVLAERTGQPLEVIERDTDRDNFKSADEALEYGLIDKVLTRNTEDQK</sequence>
<feature type="chain" id="PRO_1000026064" description="ATP-dependent Clp protease proteolytic subunit">
    <location>
        <begin position="1"/>
        <end position="198"/>
    </location>
</feature>
<feature type="active site" description="Nucleophile" evidence="1">
    <location>
        <position position="98"/>
    </location>
</feature>
<feature type="active site" evidence="1">
    <location>
        <position position="123"/>
    </location>
</feature>
<organism>
    <name type="scientific">Bacillus velezensis (strain DSM 23117 / BGSC 10A6 / LMG 26770 / FZB42)</name>
    <name type="common">Bacillus amyloliquefaciens subsp. plantarum</name>
    <dbReference type="NCBI Taxonomy" id="326423"/>
    <lineage>
        <taxon>Bacteria</taxon>
        <taxon>Bacillati</taxon>
        <taxon>Bacillota</taxon>
        <taxon>Bacilli</taxon>
        <taxon>Bacillales</taxon>
        <taxon>Bacillaceae</taxon>
        <taxon>Bacillus</taxon>
        <taxon>Bacillus amyloliquefaciens group</taxon>
    </lineage>
</organism>
<comment type="function">
    <text evidence="1">Cleaves peptides in various proteins in a process that requires ATP hydrolysis. Has a chymotrypsin-like activity. Plays a major role in the degradation of misfolded proteins.</text>
</comment>
<comment type="catalytic activity">
    <reaction evidence="1">
        <text>Hydrolysis of proteins to small peptides in the presence of ATP and magnesium. alpha-casein is the usual test substrate. In the absence of ATP, only oligopeptides shorter than five residues are hydrolyzed (such as succinyl-Leu-Tyr-|-NHMec, and Leu-Tyr-Leu-|-Tyr-Trp, in which cleavage of the -Tyr-|-Leu- and -Tyr-|-Trp bonds also occurs).</text>
        <dbReference type="EC" id="3.4.21.92"/>
    </reaction>
</comment>
<comment type="subunit">
    <text evidence="1">Fourteen ClpP subunits assemble into 2 heptameric rings which stack back to back to give a disk-like structure with a central cavity, resembling the structure of eukaryotic proteasomes.</text>
</comment>
<comment type="subcellular location">
    <subcellularLocation>
        <location evidence="1">Cytoplasm</location>
    </subcellularLocation>
</comment>
<comment type="similarity">
    <text evidence="1">Belongs to the peptidase S14 family.</text>
</comment>
<evidence type="ECO:0000255" key="1">
    <source>
        <dbReference type="HAMAP-Rule" id="MF_00444"/>
    </source>
</evidence>
<gene>
    <name evidence="1" type="primary">clpP</name>
    <name type="ordered locus">RBAM_031850</name>
</gene>
<keyword id="KW-0963">Cytoplasm</keyword>
<keyword id="KW-0378">Hydrolase</keyword>
<keyword id="KW-0645">Protease</keyword>
<keyword id="KW-0720">Serine protease</keyword>